<dbReference type="EMBL" id="CR555306">
    <property type="protein sequence ID" value="CAI08283.1"/>
    <property type="molecule type" value="Genomic_DNA"/>
</dbReference>
<dbReference type="RefSeq" id="WP_011237973.1">
    <property type="nucleotide sequence ID" value="NC_006513.1"/>
</dbReference>
<dbReference type="SMR" id="Q5P331"/>
<dbReference type="STRING" id="76114.ebA3829"/>
<dbReference type="KEGG" id="eba:ebA3829"/>
<dbReference type="eggNOG" id="COG0088">
    <property type="taxonomic scope" value="Bacteria"/>
</dbReference>
<dbReference type="HOGENOM" id="CLU_041575_5_2_4"/>
<dbReference type="OrthoDB" id="9803201at2"/>
<dbReference type="Proteomes" id="UP000006552">
    <property type="component" value="Chromosome"/>
</dbReference>
<dbReference type="GO" id="GO:1990904">
    <property type="term" value="C:ribonucleoprotein complex"/>
    <property type="evidence" value="ECO:0007669"/>
    <property type="project" value="UniProtKB-KW"/>
</dbReference>
<dbReference type="GO" id="GO:0005840">
    <property type="term" value="C:ribosome"/>
    <property type="evidence" value="ECO:0007669"/>
    <property type="project" value="UniProtKB-KW"/>
</dbReference>
<dbReference type="GO" id="GO:0019843">
    <property type="term" value="F:rRNA binding"/>
    <property type="evidence" value="ECO:0007669"/>
    <property type="project" value="UniProtKB-UniRule"/>
</dbReference>
<dbReference type="GO" id="GO:0003735">
    <property type="term" value="F:structural constituent of ribosome"/>
    <property type="evidence" value="ECO:0007669"/>
    <property type="project" value="InterPro"/>
</dbReference>
<dbReference type="GO" id="GO:0006412">
    <property type="term" value="P:translation"/>
    <property type="evidence" value="ECO:0007669"/>
    <property type="project" value="UniProtKB-UniRule"/>
</dbReference>
<dbReference type="Gene3D" id="3.40.1370.10">
    <property type="match status" value="1"/>
</dbReference>
<dbReference type="HAMAP" id="MF_01328_B">
    <property type="entry name" value="Ribosomal_uL4_B"/>
    <property type="match status" value="1"/>
</dbReference>
<dbReference type="InterPro" id="IPR002136">
    <property type="entry name" value="Ribosomal_uL4"/>
</dbReference>
<dbReference type="InterPro" id="IPR013005">
    <property type="entry name" value="Ribosomal_uL4-like"/>
</dbReference>
<dbReference type="InterPro" id="IPR023574">
    <property type="entry name" value="Ribosomal_uL4_dom_sf"/>
</dbReference>
<dbReference type="NCBIfam" id="TIGR03953">
    <property type="entry name" value="rplD_bact"/>
    <property type="match status" value="1"/>
</dbReference>
<dbReference type="PANTHER" id="PTHR10746">
    <property type="entry name" value="50S RIBOSOMAL PROTEIN L4"/>
    <property type="match status" value="1"/>
</dbReference>
<dbReference type="PANTHER" id="PTHR10746:SF6">
    <property type="entry name" value="LARGE RIBOSOMAL SUBUNIT PROTEIN UL4M"/>
    <property type="match status" value="1"/>
</dbReference>
<dbReference type="Pfam" id="PF00573">
    <property type="entry name" value="Ribosomal_L4"/>
    <property type="match status" value="1"/>
</dbReference>
<dbReference type="SUPFAM" id="SSF52166">
    <property type="entry name" value="Ribosomal protein L4"/>
    <property type="match status" value="1"/>
</dbReference>
<comment type="function">
    <text evidence="1">One of the primary rRNA binding proteins, this protein initially binds near the 5'-end of the 23S rRNA. It is important during the early stages of 50S assembly. It makes multiple contacts with different domains of the 23S rRNA in the assembled 50S subunit and ribosome.</text>
</comment>
<comment type="function">
    <text evidence="1">Forms part of the polypeptide exit tunnel.</text>
</comment>
<comment type="subunit">
    <text evidence="1">Part of the 50S ribosomal subunit.</text>
</comment>
<comment type="similarity">
    <text evidence="1">Belongs to the universal ribosomal protein uL4 family.</text>
</comment>
<keyword id="KW-1185">Reference proteome</keyword>
<keyword id="KW-0687">Ribonucleoprotein</keyword>
<keyword id="KW-0689">Ribosomal protein</keyword>
<keyword id="KW-0694">RNA-binding</keyword>
<keyword id="KW-0699">rRNA-binding</keyword>
<reference key="1">
    <citation type="journal article" date="2005" name="Arch. Microbiol.">
        <title>The genome sequence of an anaerobic aromatic-degrading denitrifying bacterium, strain EbN1.</title>
        <authorList>
            <person name="Rabus R."/>
            <person name="Kube M."/>
            <person name="Heider J."/>
            <person name="Beck A."/>
            <person name="Heitmann K."/>
            <person name="Widdel F."/>
            <person name="Reinhardt R."/>
        </authorList>
    </citation>
    <scope>NUCLEOTIDE SEQUENCE [LARGE SCALE GENOMIC DNA]</scope>
    <source>
        <strain>DSM 19018 / LMG 30748 / EbN1</strain>
    </source>
</reference>
<gene>
    <name evidence="1" type="primary">rplD</name>
    <name type="ordered locus">AZOSEA21580</name>
    <name type="ORF">ebA3829</name>
</gene>
<feature type="chain" id="PRO_0000242336" description="Large ribosomal subunit protein uL4">
    <location>
        <begin position="1"/>
        <end position="206"/>
    </location>
</feature>
<feature type="region of interest" description="Disordered" evidence="2">
    <location>
        <begin position="47"/>
        <end position="94"/>
    </location>
</feature>
<feature type="compositionally biased region" description="Basic residues" evidence="2">
    <location>
        <begin position="59"/>
        <end position="70"/>
    </location>
</feature>
<organism>
    <name type="scientific">Aromatoleum aromaticum (strain DSM 19018 / LMG 30748 / EbN1)</name>
    <name type="common">Azoarcus sp. (strain EbN1)</name>
    <dbReference type="NCBI Taxonomy" id="76114"/>
    <lineage>
        <taxon>Bacteria</taxon>
        <taxon>Pseudomonadati</taxon>
        <taxon>Pseudomonadota</taxon>
        <taxon>Betaproteobacteria</taxon>
        <taxon>Rhodocyclales</taxon>
        <taxon>Rhodocyclaceae</taxon>
        <taxon>Aromatoleum</taxon>
    </lineage>
</organism>
<evidence type="ECO:0000255" key="1">
    <source>
        <dbReference type="HAMAP-Rule" id="MF_01328"/>
    </source>
</evidence>
<evidence type="ECO:0000256" key="2">
    <source>
        <dbReference type="SAM" id="MobiDB-lite"/>
    </source>
</evidence>
<evidence type="ECO:0000305" key="3"/>
<protein>
    <recommendedName>
        <fullName evidence="1">Large ribosomal subunit protein uL4</fullName>
    </recommendedName>
    <alternativeName>
        <fullName evidence="3">50S ribosomal protein L4</fullName>
    </alternativeName>
</protein>
<accession>Q5P331</accession>
<sequence>MELKLLNDQGAQSATLQASDALFGRDYNEALIHQVVVAYMANARSGNRAQKGRAEVSKSTRKPWRQKGTGRARAGMASSPLWRGGGRVFPNSPEDNFSQKLNRKMYRAGVASILSQLAREDRLAIVENFSVEAPKTRLLSQKLKGMGLDSVLVITDEFDENLFLSSRNLHKVLVLEVSETDPVSLVHYDRVIVTKGALAKMEEAWQ</sequence>
<name>RL4_AROAE</name>
<proteinExistence type="inferred from homology"/>